<gene>
    <name evidence="1" type="primary">yeaH</name>
    <name type="ordered locus">E2348C_1911</name>
</gene>
<evidence type="ECO:0000255" key="1">
    <source>
        <dbReference type="HAMAP-Rule" id="MF_01232"/>
    </source>
</evidence>
<evidence type="ECO:0000256" key="2">
    <source>
        <dbReference type="SAM" id="MobiDB-lite"/>
    </source>
</evidence>
<sequence length="427" mass="49450">MTWFIDRRLNGKNKSMVNRQRFLRRYKAQIKQSISEAINKRSVTDVDSGESVSIPTEDISEPMFHQGRGGLRHRVHPGNDHFVQNDRIERPQGGGGGSGSGQGQASQDGEGQDEFVFQISKDEYLDLLFEDLALPNLKQNQQRQLTEYKTHRAGYTANGVPANISVVRSLQNSLARRTAMTAGKRRELHALEENLAIISNSEPAQLLEEERLRKEIAELRAKIERVPFIDTFDLRYKNYEKRPDPSSQAVMFCLMDVSGSMDQSTKDMAKRFYILLYLFLSRTYKNVEVVYIRHHTQAKEVDEHEFFYSQETGGTIVSSALKLMDEVVKERYNPAQWNIYAAQASDGDNWADDSPLCHEILAKKILPVVRYYSYIEITRRAHQTLWREYEHLQSTFDNFAMQHIRDQDDIYPVFRELFHKQNATAKD</sequence>
<proteinExistence type="inferred from homology"/>
<comment type="similarity">
    <text evidence="1">Belongs to the UPF0229 family.</text>
</comment>
<dbReference type="EMBL" id="FM180568">
    <property type="protein sequence ID" value="CAS09459.1"/>
    <property type="molecule type" value="Genomic_DNA"/>
</dbReference>
<dbReference type="RefSeq" id="WP_000219684.1">
    <property type="nucleotide sequence ID" value="NC_011601.1"/>
</dbReference>
<dbReference type="SMR" id="B7USG4"/>
<dbReference type="KEGG" id="ecg:E2348C_1911"/>
<dbReference type="HOGENOM" id="CLU_049702_0_0_6"/>
<dbReference type="Proteomes" id="UP000008205">
    <property type="component" value="Chromosome"/>
</dbReference>
<dbReference type="HAMAP" id="MF_01232">
    <property type="entry name" value="UPF0229"/>
    <property type="match status" value="1"/>
</dbReference>
<dbReference type="InterPro" id="IPR006698">
    <property type="entry name" value="UPF0229"/>
</dbReference>
<dbReference type="NCBIfam" id="NF003707">
    <property type="entry name" value="PRK05325.1-2"/>
    <property type="match status" value="1"/>
</dbReference>
<dbReference type="NCBIfam" id="NF003708">
    <property type="entry name" value="PRK05325.1-3"/>
    <property type="match status" value="1"/>
</dbReference>
<dbReference type="PANTHER" id="PTHR30510">
    <property type="entry name" value="UPF0229 PROTEIN YEAH"/>
    <property type="match status" value="1"/>
</dbReference>
<dbReference type="PANTHER" id="PTHR30510:SF2">
    <property type="entry name" value="UPF0229 PROTEIN YEAH"/>
    <property type="match status" value="1"/>
</dbReference>
<dbReference type="Pfam" id="PF04285">
    <property type="entry name" value="DUF444"/>
    <property type="match status" value="1"/>
</dbReference>
<keyword id="KW-1185">Reference proteome</keyword>
<feature type="chain" id="PRO_1000164979" description="UPF0229 protein YeaH">
    <location>
        <begin position="1"/>
        <end position="427"/>
    </location>
</feature>
<feature type="region of interest" description="Disordered" evidence="2">
    <location>
        <begin position="79"/>
        <end position="110"/>
    </location>
</feature>
<feature type="compositionally biased region" description="Basic and acidic residues" evidence="2">
    <location>
        <begin position="79"/>
        <end position="90"/>
    </location>
</feature>
<feature type="compositionally biased region" description="Gly residues" evidence="2">
    <location>
        <begin position="92"/>
        <end position="102"/>
    </location>
</feature>
<accession>B7USG4</accession>
<reference key="1">
    <citation type="journal article" date="2009" name="J. Bacteriol.">
        <title>Complete genome sequence and comparative genome analysis of enteropathogenic Escherichia coli O127:H6 strain E2348/69.</title>
        <authorList>
            <person name="Iguchi A."/>
            <person name="Thomson N.R."/>
            <person name="Ogura Y."/>
            <person name="Saunders D."/>
            <person name="Ooka T."/>
            <person name="Henderson I.R."/>
            <person name="Harris D."/>
            <person name="Asadulghani M."/>
            <person name="Kurokawa K."/>
            <person name="Dean P."/>
            <person name="Kenny B."/>
            <person name="Quail M.A."/>
            <person name="Thurston S."/>
            <person name="Dougan G."/>
            <person name="Hayashi T."/>
            <person name="Parkhill J."/>
            <person name="Frankel G."/>
        </authorList>
    </citation>
    <scope>NUCLEOTIDE SEQUENCE [LARGE SCALE GENOMIC DNA]</scope>
    <source>
        <strain>E2348/69 / EPEC</strain>
    </source>
</reference>
<name>YEAH_ECO27</name>
<organism>
    <name type="scientific">Escherichia coli O127:H6 (strain E2348/69 / EPEC)</name>
    <dbReference type="NCBI Taxonomy" id="574521"/>
    <lineage>
        <taxon>Bacteria</taxon>
        <taxon>Pseudomonadati</taxon>
        <taxon>Pseudomonadota</taxon>
        <taxon>Gammaproteobacteria</taxon>
        <taxon>Enterobacterales</taxon>
        <taxon>Enterobacteriaceae</taxon>
        <taxon>Escherichia</taxon>
    </lineage>
</organism>
<protein>
    <recommendedName>
        <fullName evidence="1">UPF0229 protein YeaH</fullName>
    </recommendedName>
</protein>